<sequence>MKDPILKEAELRMKKSVEAIDEELKKLRTGRPSPALLEEIKIDYYGVPTPINQVATINVTEERSLIIKPWEKNLLSAIEKAIQASDLGLNPTNDGNVVRLVFPSPTTEQRQKWVKKTKEIVEHGKIAVRNIRRDVIKELKEMTKNGEISEDDEKRLEKEVQNLTDKYIEELDKLFERKEKEIMEF</sequence>
<dbReference type="EMBL" id="CP001185">
    <property type="protein sequence ID" value="ACJ76057.1"/>
    <property type="molecule type" value="Genomic_DNA"/>
</dbReference>
<dbReference type="RefSeq" id="WP_012580300.1">
    <property type="nucleotide sequence ID" value="NC_011653.1"/>
</dbReference>
<dbReference type="SMR" id="B7IDI0"/>
<dbReference type="STRING" id="484019.THA_1619"/>
<dbReference type="KEGG" id="taf:THA_1619"/>
<dbReference type="eggNOG" id="COG0233">
    <property type="taxonomic scope" value="Bacteria"/>
</dbReference>
<dbReference type="HOGENOM" id="CLU_073981_2_0_0"/>
<dbReference type="OrthoDB" id="9804006at2"/>
<dbReference type="Proteomes" id="UP000002453">
    <property type="component" value="Chromosome"/>
</dbReference>
<dbReference type="GO" id="GO:0005737">
    <property type="term" value="C:cytoplasm"/>
    <property type="evidence" value="ECO:0007669"/>
    <property type="project" value="UniProtKB-SubCell"/>
</dbReference>
<dbReference type="GO" id="GO:0043023">
    <property type="term" value="F:ribosomal large subunit binding"/>
    <property type="evidence" value="ECO:0007669"/>
    <property type="project" value="TreeGrafter"/>
</dbReference>
<dbReference type="GO" id="GO:0006415">
    <property type="term" value="P:translational termination"/>
    <property type="evidence" value="ECO:0007669"/>
    <property type="project" value="UniProtKB-UniRule"/>
</dbReference>
<dbReference type="CDD" id="cd00520">
    <property type="entry name" value="RRF"/>
    <property type="match status" value="1"/>
</dbReference>
<dbReference type="FunFam" id="1.10.132.20:FF:000001">
    <property type="entry name" value="Ribosome-recycling factor"/>
    <property type="match status" value="1"/>
</dbReference>
<dbReference type="FunFam" id="3.30.1360.40:FF:000001">
    <property type="entry name" value="Ribosome-recycling factor"/>
    <property type="match status" value="1"/>
</dbReference>
<dbReference type="Gene3D" id="3.30.1360.40">
    <property type="match status" value="1"/>
</dbReference>
<dbReference type="Gene3D" id="1.10.132.20">
    <property type="entry name" value="Ribosome-recycling factor"/>
    <property type="match status" value="1"/>
</dbReference>
<dbReference type="HAMAP" id="MF_00040">
    <property type="entry name" value="RRF"/>
    <property type="match status" value="1"/>
</dbReference>
<dbReference type="InterPro" id="IPR002661">
    <property type="entry name" value="Ribosome_recyc_fac"/>
</dbReference>
<dbReference type="InterPro" id="IPR023584">
    <property type="entry name" value="Ribosome_recyc_fac_dom"/>
</dbReference>
<dbReference type="InterPro" id="IPR036191">
    <property type="entry name" value="RRF_sf"/>
</dbReference>
<dbReference type="NCBIfam" id="TIGR00496">
    <property type="entry name" value="frr"/>
    <property type="match status" value="1"/>
</dbReference>
<dbReference type="PANTHER" id="PTHR20982:SF3">
    <property type="entry name" value="MITOCHONDRIAL RIBOSOME RECYCLING FACTOR PSEUDO 1"/>
    <property type="match status" value="1"/>
</dbReference>
<dbReference type="PANTHER" id="PTHR20982">
    <property type="entry name" value="RIBOSOME RECYCLING FACTOR"/>
    <property type="match status" value="1"/>
</dbReference>
<dbReference type="Pfam" id="PF01765">
    <property type="entry name" value="RRF"/>
    <property type="match status" value="1"/>
</dbReference>
<dbReference type="SUPFAM" id="SSF55194">
    <property type="entry name" value="Ribosome recycling factor, RRF"/>
    <property type="match status" value="1"/>
</dbReference>
<name>RRF_THEAB</name>
<comment type="function">
    <text evidence="1">Responsible for the release of ribosomes from messenger RNA at the termination of protein biosynthesis. May increase the efficiency of translation by recycling ribosomes from one round of translation to another.</text>
</comment>
<comment type="subcellular location">
    <subcellularLocation>
        <location evidence="1">Cytoplasm</location>
    </subcellularLocation>
</comment>
<comment type="similarity">
    <text evidence="1">Belongs to the RRF family.</text>
</comment>
<proteinExistence type="inferred from homology"/>
<feature type="chain" id="PRO_1000194962" description="Ribosome-recycling factor">
    <location>
        <begin position="1"/>
        <end position="185"/>
    </location>
</feature>
<accession>B7IDI0</accession>
<gene>
    <name evidence="1" type="primary">frr</name>
    <name type="ordered locus">THA_1619</name>
</gene>
<keyword id="KW-0963">Cytoplasm</keyword>
<keyword id="KW-0648">Protein biosynthesis</keyword>
<keyword id="KW-1185">Reference proteome</keyword>
<organism>
    <name type="scientific">Thermosipho africanus (strain TCF52B)</name>
    <dbReference type="NCBI Taxonomy" id="484019"/>
    <lineage>
        <taxon>Bacteria</taxon>
        <taxon>Thermotogati</taxon>
        <taxon>Thermotogota</taxon>
        <taxon>Thermotogae</taxon>
        <taxon>Thermotogales</taxon>
        <taxon>Fervidobacteriaceae</taxon>
        <taxon>Thermosipho</taxon>
    </lineage>
</organism>
<evidence type="ECO:0000255" key="1">
    <source>
        <dbReference type="HAMAP-Rule" id="MF_00040"/>
    </source>
</evidence>
<reference key="1">
    <citation type="journal article" date="2009" name="J. Bacteriol.">
        <title>The genome of Thermosipho africanus TCF52B: lateral genetic connections to the Firmicutes and Archaea.</title>
        <authorList>
            <person name="Nesboe C.L."/>
            <person name="Bapteste E."/>
            <person name="Curtis B."/>
            <person name="Dahle H."/>
            <person name="Lopez P."/>
            <person name="Macleod D."/>
            <person name="Dlutek M."/>
            <person name="Bowman S."/>
            <person name="Zhaxybayeva O."/>
            <person name="Birkeland N.-K."/>
            <person name="Doolittle W.F."/>
        </authorList>
    </citation>
    <scope>NUCLEOTIDE SEQUENCE [LARGE SCALE GENOMIC DNA]</scope>
    <source>
        <strain>TCF52B</strain>
    </source>
</reference>
<protein>
    <recommendedName>
        <fullName evidence="1">Ribosome-recycling factor</fullName>
        <shortName evidence="1">RRF</shortName>
    </recommendedName>
    <alternativeName>
        <fullName evidence="1">Ribosome-releasing factor</fullName>
    </alternativeName>
</protein>